<sequence>MSDLPDTDFTQRFIFDERDVRGEWVSLDDSYAAVLARHEYPQPVKVLLGELMAATALLVGAMKFDGLLILQARSAGPIPLLMVECSSEREIRGMARYEADQISADATLSQLMPDGHLTLTIDPVKGQRYQGTVDLDGANLSECFTNYFVQSQQLNTRFWLNAAGGKARGLLLQQLPRDRQPDDEEREDSWQHVVALAKTLKPEEWTEGNETLLHRLYHEDAVRLFDIQPLRFNCSCSRERSGNALVSLGEHDAKALVDECGGTVEIDCQFCNERYFFDASDVAQLFAGGGTDVASETRH</sequence>
<proteinExistence type="inferred from homology"/>
<comment type="function">
    <text evidence="1">Redox regulated molecular chaperone. Protects both thermally unfolding and oxidatively damaged proteins from irreversible aggregation. Plays an important role in the bacterial defense system toward oxidative stress.</text>
</comment>
<comment type="subcellular location">
    <subcellularLocation>
        <location evidence="1">Cytoplasm</location>
    </subcellularLocation>
</comment>
<comment type="PTM">
    <text evidence="1">Under oxidizing conditions two disulfide bonds are formed involving the reactive cysteines. Under reducing conditions zinc is bound to the reactive cysteines and the protein is inactive.</text>
</comment>
<comment type="similarity">
    <text evidence="1">Belongs to the HSP33 family.</text>
</comment>
<dbReference type="EMBL" id="CP000712">
    <property type="protein sequence ID" value="ABQ76441.1"/>
    <property type="molecule type" value="Genomic_DNA"/>
</dbReference>
<dbReference type="SMR" id="A5VX31"/>
<dbReference type="KEGG" id="ppf:Pput_0267"/>
<dbReference type="eggNOG" id="COG1281">
    <property type="taxonomic scope" value="Bacteria"/>
</dbReference>
<dbReference type="HOGENOM" id="CLU_054493_0_0_6"/>
<dbReference type="GO" id="GO:0005737">
    <property type="term" value="C:cytoplasm"/>
    <property type="evidence" value="ECO:0007669"/>
    <property type="project" value="UniProtKB-SubCell"/>
</dbReference>
<dbReference type="GO" id="GO:0044183">
    <property type="term" value="F:protein folding chaperone"/>
    <property type="evidence" value="ECO:0007669"/>
    <property type="project" value="TreeGrafter"/>
</dbReference>
<dbReference type="GO" id="GO:0051082">
    <property type="term" value="F:unfolded protein binding"/>
    <property type="evidence" value="ECO:0007669"/>
    <property type="project" value="UniProtKB-UniRule"/>
</dbReference>
<dbReference type="GO" id="GO:0042026">
    <property type="term" value="P:protein refolding"/>
    <property type="evidence" value="ECO:0007669"/>
    <property type="project" value="TreeGrafter"/>
</dbReference>
<dbReference type="CDD" id="cd00498">
    <property type="entry name" value="Hsp33"/>
    <property type="match status" value="1"/>
</dbReference>
<dbReference type="Gene3D" id="1.10.287.480">
    <property type="entry name" value="helix hairpin bin"/>
    <property type="match status" value="1"/>
</dbReference>
<dbReference type="Gene3D" id="3.55.30.10">
    <property type="entry name" value="Hsp33 domain"/>
    <property type="match status" value="1"/>
</dbReference>
<dbReference type="Gene3D" id="3.90.1280.10">
    <property type="entry name" value="HSP33 redox switch-like"/>
    <property type="match status" value="1"/>
</dbReference>
<dbReference type="HAMAP" id="MF_00117">
    <property type="entry name" value="HslO"/>
    <property type="match status" value="1"/>
</dbReference>
<dbReference type="InterPro" id="IPR000397">
    <property type="entry name" value="Heat_shock_Hsp33"/>
</dbReference>
<dbReference type="InterPro" id="IPR016154">
    <property type="entry name" value="Heat_shock_Hsp33_C"/>
</dbReference>
<dbReference type="InterPro" id="IPR016153">
    <property type="entry name" value="Heat_shock_Hsp33_N"/>
</dbReference>
<dbReference type="InterPro" id="IPR023212">
    <property type="entry name" value="Hsp33_helix_hairpin_bin_dom_sf"/>
</dbReference>
<dbReference type="NCBIfam" id="NF001033">
    <property type="entry name" value="PRK00114.1"/>
    <property type="match status" value="1"/>
</dbReference>
<dbReference type="PANTHER" id="PTHR30111">
    <property type="entry name" value="33 KDA CHAPERONIN"/>
    <property type="match status" value="1"/>
</dbReference>
<dbReference type="PANTHER" id="PTHR30111:SF1">
    <property type="entry name" value="33 KDA CHAPERONIN"/>
    <property type="match status" value="1"/>
</dbReference>
<dbReference type="Pfam" id="PF01430">
    <property type="entry name" value="HSP33"/>
    <property type="match status" value="1"/>
</dbReference>
<dbReference type="PIRSF" id="PIRSF005261">
    <property type="entry name" value="Heat_shock_Hsp33"/>
    <property type="match status" value="1"/>
</dbReference>
<dbReference type="SUPFAM" id="SSF64397">
    <property type="entry name" value="Hsp33 domain"/>
    <property type="match status" value="1"/>
</dbReference>
<dbReference type="SUPFAM" id="SSF118352">
    <property type="entry name" value="HSP33 redox switch-like"/>
    <property type="match status" value="1"/>
</dbReference>
<keyword id="KW-0143">Chaperone</keyword>
<keyword id="KW-0963">Cytoplasm</keyword>
<keyword id="KW-1015">Disulfide bond</keyword>
<keyword id="KW-0676">Redox-active center</keyword>
<keyword id="KW-0862">Zinc</keyword>
<protein>
    <recommendedName>
        <fullName evidence="1">33 kDa chaperonin</fullName>
    </recommendedName>
    <alternativeName>
        <fullName evidence="1">Heat shock protein 33 homolog</fullName>
        <shortName evidence="1">HSP33</shortName>
    </alternativeName>
</protein>
<evidence type="ECO:0000255" key="1">
    <source>
        <dbReference type="HAMAP-Rule" id="MF_00117"/>
    </source>
</evidence>
<gene>
    <name evidence="1" type="primary">hslO</name>
    <name type="ordered locus">Pput_0267</name>
</gene>
<feature type="chain" id="PRO_1000015562" description="33 kDa chaperonin">
    <location>
        <begin position="1"/>
        <end position="299"/>
    </location>
</feature>
<feature type="disulfide bond" description="Redox-active" evidence="1">
    <location>
        <begin position="234"/>
        <end position="236"/>
    </location>
</feature>
<feature type="disulfide bond" description="Redox-active" evidence="1">
    <location>
        <begin position="268"/>
        <end position="271"/>
    </location>
</feature>
<name>HSLO_PSEP1</name>
<accession>A5VX31</accession>
<reference key="1">
    <citation type="submission" date="2007-05" db="EMBL/GenBank/DDBJ databases">
        <title>Complete sequence of Pseudomonas putida F1.</title>
        <authorList>
            <consortium name="US DOE Joint Genome Institute"/>
            <person name="Copeland A."/>
            <person name="Lucas S."/>
            <person name="Lapidus A."/>
            <person name="Barry K."/>
            <person name="Detter J.C."/>
            <person name="Glavina del Rio T."/>
            <person name="Hammon N."/>
            <person name="Israni S."/>
            <person name="Dalin E."/>
            <person name="Tice H."/>
            <person name="Pitluck S."/>
            <person name="Chain P."/>
            <person name="Malfatti S."/>
            <person name="Shin M."/>
            <person name="Vergez L."/>
            <person name="Schmutz J."/>
            <person name="Larimer F."/>
            <person name="Land M."/>
            <person name="Hauser L."/>
            <person name="Kyrpides N."/>
            <person name="Lykidis A."/>
            <person name="Parales R."/>
            <person name="Richardson P."/>
        </authorList>
    </citation>
    <scope>NUCLEOTIDE SEQUENCE [LARGE SCALE GENOMIC DNA]</scope>
    <source>
        <strain>ATCC 700007 / DSM 6899 / JCM 31910 / BCRC 17059 / LMG 24140 / F1</strain>
    </source>
</reference>
<organism>
    <name type="scientific">Pseudomonas putida (strain ATCC 700007 / DSM 6899 / JCM 31910 / BCRC 17059 / LMG 24140 / F1)</name>
    <dbReference type="NCBI Taxonomy" id="351746"/>
    <lineage>
        <taxon>Bacteria</taxon>
        <taxon>Pseudomonadati</taxon>
        <taxon>Pseudomonadota</taxon>
        <taxon>Gammaproteobacteria</taxon>
        <taxon>Pseudomonadales</taxon>
        <taxon>Pseudomonadaceae</taxon>
        <taxon>Pseudomonas</taxon>
    </lineage>
</organism>